<organismHost>
    <name type="scientific">Avena sativa</name>
    <name type="common">Oat</name>
    <dbReference type="NCBI Taxonomy" id="4498"/>
</organismHost>
<organismHost>
    <name type="scientific">Axonopus compressus</name>
    <dbReference type="NCBI Taxonomy" id="217170"/>
</organismHost>
<organismHost>
    <name type="scientific">Cenchrus americanus</name>
    <name type="common">Pearl millet</name>
    <name type="synonym">Pennisetum glaucum</name>
    <dbReference type="NCBI Taxonomy" id="4543"/>
</organismHost>
<organismHost>
    <name type="scientific">Cenchrus polystachios</name>
    <dbReference type="NCBI Taxonomy" id="281129"/>
</organismHost>
<organismHost>
    <name type="scientific">Coix lacryma-jobi</name>
    <name type="common">Job's tears</name>
    <dbReference type="NCBI Taxonomy" id="4505"/>
</organismHost>
<organismHost>
    <name type="scientific">Dactyloctenium aegyptium</name>
    <dbReference type="NCBI Taxonomy" id="270102"/>
</organismHost>
<organismHost>
    <name type="scientific">Digitaria</name>
    <dbReference type="NCBI Taxonomy" id="66017"/>
</organismHost>
<organismHost>
    <name type="scientific">Echinochloa colona</name>
    <dbReference type="NCBI Taxonomy" id="90396"/>
</organismHost>
<organismHost>
    <name type="scientific">Eleusine coracana</name>
    <name type="common">Indian finger millet</name>
    <name type="synonym">Ragi</name>
    <dbReference type="NCBI Taxonomy" id="4511"/>
</organismHost>
<organismHost>
    <name type="scientific">Eleusine indica</name>
    <name type="common">Goosegrass</name>
    <name type="synonym">Cynosurus indicus</name>
    <dbReference type="NCBI Taxonomy" id="29674"/>
</organismHost>
<organismHost>
    <name type="scientific">Hordeum vulgare</name>
    <name type="common">Barley</name>
    <dbReference type="NCBI Taxonomy" id="4513"/>
</organismHost>
<organismHost>
    <name type="scientific">Megathyrsus maximus</name>
    <dbReference type="NCBI Taxonomy" id="59788"/>
</organismHost>
<organismHost>
    <name type="scientific">Melinis repens</name>
    <name type="common">Red Natal grass</name>
    <name type="synonym">Rhynchelytrum repens</name>
    <dbReference type="NCBI Taxonomy" id="29709"/>
</organismHost>
<organismHost>
    <name type="scientific">Oryza glaberrima</name>
    <name type="common">African rice</name>
    <dbReference type="NCBI Taxonomy" id="4538"/>
</organismHost>
<organismHost>
    <name type="scientific">Oryza sativa</name>
    <name type="common">Rice</name>
    <dbReference type="NCBI Taxonomy" id="4530"/>
</organismHost>
<organismHost>
    <name type="scientific">Paspalum conjugatum</name>
    <name type="common">Hilo grass</name>
    <dbReference type="NCBI Taxonomy" id="158143"/>
</organismHost>
<organismHost>
    <name type="scientific">Paspalum notatum</name>
    <name type="common">Bahia grass</name>
    <dbReference type="NCBI Taxonomy" id="147272"/>
</organismHost>
<organismHost>
    <name type="scientific">Paspalum scrobiculatum</name>
    <dbReference type="NCBI Taxonomy" id="173849"/>
</organismHost>
<organismHost>
    <name type="scientific">Rottboellia cochinchinensis</name>
    <dbReference type="NCBI Taxonomy" id="300125"/>
</organismHost>
<organismHost>
    <name type="scientific">Saccharum officinarum</name>
    <name type="common">Sugarcane</name>
    <dbReference type="NCBI Taxonomy" id="4547"/>
</organismHost>
<organismHost>
    <name type="scientific">Setaria barbata</name>
    <dbReference type="NCBI Taxonomy" id="192628"/>
</organismHost>
<organismHost>
    <name type="scientific">Triticum aestivum</name>
    <name type="common">Wheat</name>
    <dbReference type="NCBI Taxonomy" id="4565"/>
</organismHost>
<organismHost>
    <name type="scientific">Urochloa deflexa</name>
    <dbReference type="NCBI Taxonomy" id="240436"/>
</organismHost>
<organismHost>
    <name type="scientific">Zea mays</name>
    <name type="common">Maize</name>
    <dbReference type="NCBI Taxonomy" id="4577"/>
</organismHost>
<comment type="function">
    <text evidence="1">Implicated in enhancement of V-sense gene expression. Acts a an inhibitor of C-sense gene transcription (By similarity).</text>
</comment>
<comment type="subunit">
    <text evidence="1">Homooligomer. Interacts (via LXCXE domain) with host retinoblastoma-related protein 1 (RBR1), and may thereby deregulate the host cell cycle. Part of the C- and V-complexes which are RepA-Rep-DNA complexes involved in the c-sense and v-sense transcription (By similarity).</text>
</comment>
<comment type="subcellular location">
    <subcellularLocation>
        <location evidence="1">Host nucleus</location>
    </subcellularLocation>
    <subcellularLocation>
        <location evidence="1">Host cytoplasm</location>
    </subcellularLocation>
</comment>
<comment type="alternative products">
    <event type="alternative splicing"/>
    <isoform>
        <id>O40987-1</id>
        <name>RepA</name>
        <sequence type="displayed"/>
    </isoform>
    <isoform>
        <id>O40986-1</id>
        <name>Rep</name>
        <sequence type="external"/>
    </isoform>
</comment>
<comment type="domain">
    <text>There are 3 rolling circle replication (RCR) motifs. RCR-2 may be involved in metal coordination. RCR-3 is required for phosphodiester bond cleavage for initiation of RCR.</text>
</comment>
<comment type="domain">
    <text evidence="1">The LXCXE motif specifically binds to host RBR1.</text>
</comment>
<comment type="miscellaneous">
    <molecule>Isoform RepA</molecule>
    <text>Produced from the unspliced transcript.</text>
</comment>
<comment type="similarity">
    <text evidence="5">Belongs to the geminiviridae Rep protein family.</text>
</comment>
<proteinExistence type="inferred from homology"/>
<gene>
    <name type="ORF">C1</name>
</gene>
<dbReference type="EC" id="3.1.21.-"/>
<dbReference type="EMBL" id="AF007881">
    <property type="protein sequence ID" value="AAB63456.1"/>
    <property type="molecule type" value="Genomic_DNA"/>
</dbReference>
<dbReference type="SMR" id="O40987"/>
<dbReference type="Proteomes" id="UP000008872">
    <property type="component" value="Genome"/>
</dbReference>
<dbReference type="GO" id="GO:0030430">
    <property type="term" value="C:host cell cytoplasm"/>
    <property type="evidence" value="ECO:0007669"/>
    <property type="project" value="UniProtKB-SubCell"/>
</dbReference>
<dbReference type="GO" id="GO:0042025">
    <property type="term" value="C:host cell nucleus"/>
    <property type="evidence" value="ECO:0007669"/>
    <property type="project" value="UniProtKB-SubCell"/>
</dbReference>
<dbReference type="GO" id="GO:0003677">
    <property type="term" value="F:DNA binding"/>
    <property type="evidence" value="ECO:0007669"/>
    <property type="project" value="UniProtKB-KW"/>
</dbReference>
<dbReference type="GO" id="GO:0016888">
    <property type="term" value="F:endodeoxyribonuclease activity, producing 5'-phosphomonoesters"/>
    <property type="evidence" value="ECO:0007669"/>
    <property type="project" value="InterPro"/>
</dbReference>
<dbReference type="GO" id="GO:0046872">
    <property type="term" value="F:metal ion binding"/>
    <property type="evidence" value="ECO:0007669"/>
    <property type="project" value="UniProtKB-KW"/>
</dbReference>
<dbReference type="GO" id="GO:0000166">
    <property type="term" value="F:nucleotide binding"/>
    <property type="evidence" value="ECO:0007669"/>
    <property type="project" value="UniProtKB-KW"/>
</dbReference>
<dbReference type="GO" id="GO:0016779">
    <property type="term" value="F:nucleotidyltransferase activity"/>
    <property type="evidence" value="ECO:0007669"/>
    <property type="project" value="UniProtKB-KW"/>
</dbReference>
<dbReference type="GO" id="GO:0005198">
    <property type="term" value="F:structural molecule activity"/>
    <property type="evidence" value="ECO:0007669"/>
    <property type="project" value="InterPro"/>
</dbReference>
<dbReference type="GO" id="GO:0006260">
    <property type="term" value="P:DNA replication"/>
    <property type="evidence" value="ECO:0007669"/>
    <property type="project" value="UniProtKB-KW"/>
</dbReference>
<dbReference type="GO" id="GO:0039645">
    <property type="term" value="P:symbiont-mediated perturbation of host cell cycle G1/S transition checkpoint"/>
    <property type="evidence" value="ECO:0007669"/>
    <property type="project" value="UniProtKB-KW"/>
</dbReference>
<dbReference type="Gene3D" id="3.40.1310.20">
    <property type="match status" value="1"/>
</dbReference>
<dbReference type="InterPro" id="IPR049912">
    <property type="entry name" value="CRESS_DNA_REP"/>
</dbReference>
<dbReference type="InterPro" id="IPR001146">
    <property type="entry name" value="Gemini_AL1_MSV"/>
</dbReference>
<dbReference type="InterPro" id="IPR001191">
    <property type="entry name" value="Gemini_AL1_REP"/>
</dbReference>
<dbReference type="InterPro" id="IPR022692">
    <property type="entry name" value="Gemini_AL1_REP_central"/>
</dbReference>
<dbReference type="Pfam" id="PF00799">
    <property type="entry name" value="Gemini_AL1"/>
    <property type="match status" value="1"/>
</dbReference>
<dbReference type="Pfam" id="PF08283">
    <property type="entry name" value="Gemini_AL1_M"/>
    <property type="match status" value="1"/>
</dbReference>
<dbReference type="PRINTS" id="PR00227">
    <property type="entry name" value="GEMCOATAL1"/>
</dbReference>
<dbReference type="PRINTS" id="PR00229">
    <property type="entry name" value="GEMCOATMSVL1"/>
</dbReference>
<dbReference type="SUPFAM" id="SSF55464">
    <property type="entry name" value="Origin of replication-binding domain, RBD-like"/>
    <property type="match status" value="1"/>
</dbReference>
<dbReference type="PROSITE" id="PS52020">
    <property type="entry name" value="CRESS_DNA_REP"/>
    <property type="match status" value="1"/>
</dbReference>
<evidence type="ECO:0000250" key="1"/>
<evidence type="ECO:0000255" key="2"/>
<evidence type="ECO:0000255" key="3">
    <source>
        <dbReference type="PROSITE-ProRule" id="PRU01364"/>
    </source>
</evidence>
<evidence type="ECO:0000256" key="4">
    <source>
        <dbReference type="SAM" id="MobiDB-lite"/>
    </source>
</evidence>
<evidence type="ECO:0000305" key="5"/>
<keyword id="KW-0010">Activator</keyword>
<keyword id="KW-0025">Alternative splicing</keyword>
<keyword id="KW-0190">Covalent protein-DNA linkage</keyword>
<keyword id="KW-0235">DNA replication</keyword>
<keyword id="KW-0238">DNA-binding</keyword>
<keyword id="KW-0255">Endonuclease</keyword>
<keyword id="KW-1078">G1/S host cell cycle checkpoint dysregulation by virus</keyword>
<keyword id="KW-1035">Host cytoplasm</keyword>
<keyword id="KW-1048">Host nucleus</keyword>
<keyword id="KW-0945">Host-virus interaction</keyword>
<keyword id="KW-0378">Hydrolase</keyword>
<keyword id="KW-0479">Metal-binding</keyword>
<keyword id="KW-1121">Modulation of host cell cycle by virus</keyword>
<keyword id="KW-0540">Nuclease</keyword>
<keyword id="KW-0547">Nucleotide-binding</keyword>
<keyword id="KW-0548">Nucleotidyltransferase</keyword>
<keyword id="KW-0678">Repressor</keyword>
<keyword id="KW-0808">Transferase</keyword>
<name>REPA_MSVSE</name>
<protein>
    <recommendedName>
        <fullName>Replication-associated protein A</fullName>
        <shortName>RepA</shortName>
        <ecNumber>3.1.21.-</ecNumber>
    </recommendedName>
</protein>
<organism>
    <name type="scientific">Maize streak virus genotype C (isolate Set)</name>
    <name type="common">MSV</name>
    <dbReference type="NCBI Taxonomy" id="268344"/>
    <lineage>
        <taxon>Viruses</taxon>
        <taxon>Monodnaviria</taxon>
        <taxon>Shotokuvirae</taxon>
        <taxon>Cressdnaviricota</taxon>
        <taxon>Repensiviricetes</taxon>
        <taxon>Geplafuvirales</taxon>
        <taxon>Geminiviridae</taxon>
        <taxon>Mastrevirus</taxon>
        <taxon>Maize streak virus</taxon>
    </lineage>
</organism>
<feature type="chain" id="PRO_0000316935" description="Replication-associated protein A">
    <location>
        <begin position="1"/>
        <end position="272"/>
    </location>
</feature>
<feature type="domain" description="CRESS-DNA virus Rep endonuclease" evidence="3">
    <location>
        <begin position="11"/>
        <end position="114"/>
    </location>
</feature>
<feature type="region of interest" description="Oligomerization" evidence="1">
    <location>
        <begin position="175"/>
        <end position="187"/>
    </location>
</feature>
<feature type="region of interest" description="Transactivation" evidence="1">
    <location>
        <begin position="221"/>
        <end position="230"/>
    </location>
</feature>
<feature type="region of interest" description="Disordered" evidence="4">
    <location>
        <begin position="251"/>
        <end position="272"/>
    </location>
</feature>
<feature type="short sequence motif" description="RCR-1" evidence="3">
    <location>
        <begin position="18"/>
        <end position="21"/>
    </location>
</feature>
<feature type="short sequence motif" description="RCR-2">
    <location>
        <begin position="60"/>
        <end position="65"/>
    </location>
</feature>
<feature type="short sequence motif" description="RCR-3" evidence="3">
    <location>
        <begin position="100"/>
        <end position="103"/>
    </location>
</feature>
<feature type="short sequence motif" description="LXCXE motif, interaction with host RBR1" evidence="1">
    <location>
        <begin position="198"/>
        <end position="202"/>
    </location>
</feature>
<feature type="compositionally biased region" description="Polar residues" evidence="4">
    <location>
        <begin position="251"/>
        <end position="265"/>
    </location>
</feature>
<feature type="active site" description="For DNA cleavage activity" evidence="3">
    <location>
        <position position="100"/>
    </location>
</feature>
<feature type="binding site" evidence="2">
    <location>
        <position position="52"/>
    </location>
    <ligand>
        <name>a divalent metal cation</name>
        <dbReference type="ChEBI" id="CHEBI:60240"/>
    </ligand>
</feature>
<feature type="binding site" evidence="2">
    <location>
        <position position="62"/>
    </location>
    <ligand>
        <name>a divalent metal cation</name>
        <dbReference type="ChEBI" id="CHEBI:60240"/>
    </ligand>
</feature>
<feature type="binding site" evidence="2">
    <location>
        <position position="104"/>
    </location>
    <ligand>
        <name>a divalent metal cation</name>
        <dbReference type="ChEBI" id="CHEBI:60240"/>
    </ligand>
</feature>
<sequence>MTSSSSNRPFSHRSPNTFLTYPQCPEQPEIISQRIWDLCSHWTPLYIICAREAHRDGNQCLHALIQTEKPVRTTDSRFFDIDGFHPNIQSAISPNKVRDYITKEPLALFERGTFIPRKKSFLGNSSKGNSDKKPSKDEIMRDIISHATSKQEYLSMVQKSLPYDWSTKLQYFEYSANKLFPDIQEEFINPHPTSEPDLLCNESIKDWLQPNIYQVSPQAYLLLQPNCYSIDDAISDLEWLDDLTSKQIMEQGSAASTSSVQQGQENLHGPEA</sequence>
<accession>O40987</accession>
<reference key="1">
    <citation type="journal article" date="2001" name="Arch. Virol.">
        <title>The relative infectivities and genomic characterisation of three distinct mastreviruses from South Africa.</title>
        <authorList>
            <person name="Schnippenkoetter W.H."/>
            <person name="Martin D.P."/>
            <person name="Hughes F.L."/>
            <person name="Fyvie M."/>
            <person name="Willment J.A."/>
            <person name="James D."/>
            <person name="von Wechmar M.B."/>
            <person name="Rybicki E.P."/>
        </authorList>
    </citation>
    <scope>NUCLEOTIDE SEQUENCE [GENOMIC DNA]</scope>
</reference>